<sequence>DMDDFGLGDFDDGR</sequence>
<protein>
    <recommendedName>
        <fullName evidence="2">Uncharacterized protein IMPP20</fullName>
    </recommendedName>
</protein>
<feature type="chain" id="PRO_0000371481" description="Uncharacterized protein IMPP20">
    <location>
        <begin position="1" status="less than"/>
        <end position="14" status="greater than"/>
    </location>
</feature>
<feature type="unsure residue" description="L or I" evidence="1">
    <location>
        <position position="7"/>
    </location>
</feature>
<feature type="non-terminal residue" evidence="2">
    <location>
        <position position="1"/>
    </location>
</feature>
<feature type="non-terminal residue" evidence="2">
    <location>
        <position position="14"/>
    </location>
</feature>
<comment type="tissue specificity">
    <text evidence="1">Nacreous layer of shell.</text>
</comment>
<name>IMP20_NAUMA</name>
<organism>
    <name type="scientific">Nautilus macromphalus</name>
    <name type="common">Bellybutton nautilus</name>
    <dbReference type="NCBI Taxonomy" id="34576"/>
    <lineage>
        <taxon>Eukaryota</taxon>
        <taxon>Metazoa</taxon>
        <taxon>Spiralia</taxon>
        <taxon>Lophotrochozoa</taxon>
        <taxon>Mollusca</taxon>
        <taxon>Cephalopoda</taxon>
        <taxon>Nautiloidea</taxon>
        <taxon>Nautilida</taxon>
        <taxon>Nautilidae</taxon>
        <taxon>Nautilus</taxon>
    </lineage>
</organism>
<accession>P85367</accession>
<evidence type="ECO:0000269" key="1">
    <source>
    </source>
</evidence>
<evidence type="ECO:0000303" key="2">
    <source>
    </source>
</evidence>
<proteinExistence type="evidence at protein level"/>
<reference key="1">
    <citation type="journal article" date="2009" name="ChemBioChem">
        <title>Evolution of nacre: biochemistry and 'shellomics' of the shell organic matrix of the cephalopod Nautilus macromphalus.</title>
        <authorList>
            <person name="Marie B."/>
            <person name="Marin F."/>
            <person name="Marie A."/>
            <person name="Bedouet L."/>
            <person name="Dubost L."/>
            <person name="Alcaraz G."/>
            <person name="Milet C."/>
            <person name="Luquet G."/>
        </authorList>
    </citation>
    <scope>PROTEIN SEQUENCE</scope>
    <scope>TISSUE SPECIFICITY</scope>
    <source>
        <tissue>Shell</tissue>
    </source>
</reference>
<keyword id="KW-0903">Direct protein sequencing</keyword>